<dbReference type="EC" id="5.3.1.6" evidence="1"/>
<dbReference type="EMBL" id="AM406670">
    <property type="protein sequence ID" value="CAL95442.1"/>
    <property type="molecule type" value="Genomic_DNA"/>
</dbReference>
<dbReference type="RefSeq" id="WP_011766552.1">
    <property type="nucleotide sequence ID" value="NC_008702.1"/>
</dbReference>
<dbReference type="SMR" id="A1K9D7"/>
<dbReference type="STRING" id="62928.azo2826"/>
<dbReference type="KEGG" id="aoa:dqs_2965"/>
<dbReference type="KEGG" id="azo:azo2826"/>
<dbReference type="eggNOG" id="COG0120">
    <property type="taxonomic scope" value="Bacteria"/>
</dbReference>
<dbReference type="HOGENOM" id="CLU_056590_1_1_4"/>
<dbReference type="OrthoDB" id="5870696at2"/>
<dbReference type="UniPathway" id="UPA00115">
    <property type="reaction ID" value="UER00412"/>
</dbReference>
<dbReference type="Proteomes" id="UP000002588">
    <property type="component" value="Chromosome"/>
</dbReference>
<dbReference type="GO" id="GO:0005829">
    <property type="term" value="C:cytosol"/>
    <property type="evidence" value="ECO:0007669"/>
    <property type="project" value="TreeGrafter"/>
</dbReference>
<dbReference type="GO" id="GO:0004751">
    <property type="term" value="F:ribose-5-phosphate isomerase activity"/>
    <property type="evidence" value="ECO:0007669"/>
    <property type="project" value="UniProtKB-UniRule"/>
</dbReference>
<dbReference type="GO" id="GO:0006014">
    <property type="term" value="P:D-ribose metabolic process"/>
    <property type="evidence" value="ECO:0007669"/>
    <property type="project" value="TreeGrafter"/>
</dbReference>
<dbReference type="GO" id="GO:0009052">
    <property type="term" value="P:pentose-phosphate shunt, non-oxidative branch"/>
    <property type="evidence" value="ECO:0007669"/>
    <property type="project" value="UniProtKB-UniRule"/>
</dbReference>
<dbReference type="CDD" id="cd01398">
    <property type="entry name" value="RPI_A"/>
    <property type="match status" value="1"/>
</dbReference>
<dbReference type="FunFam" id="3.40.50.1360:FF:000001">
    <property type="entry name" value="Ribose-5-phosphate isomerase A"/>
    <property type="match status" value="1"/>
</dbReference>
<dbReference type="Gene3D" id="3.30.70.260">
    <property type="match status" value="1"/>
</dbReference>
<dbReference type="Gene3D" id="3.40.50.1360">
    <property type="match status" value="1"/>
</dbReference>
<dbReference type="HAMAP" id="MF_00170">
    <property type="entry name" value="Rib_5P_isom_A"/>
    <property type="match status" value="1"/>
</dbReference>
<dbReference type="InterPro" id="IPR037171">
    <property type="entry name" value="NagB/RpiA_transferase-like"/>
</dbReference>
<dbReference type="InterPro" id="IPR020672">
    <property type="entry name" value="Ribose5P_isomerase_typA_subgr"/>
</dbReference>
<dbReference type="InterPro" id="IPR004788">
    <property type="entry name" value="Ribose5P_isomerase_type_A"/>
</dbReference>
<dbReference type="NCBIfam" id="NF001924">
    <property type="entry name" value="PRK00702.1"/>
    <property type="match status" value="1"/>
</dbReference>
<dbReference type="NCBIfam" id="TIGR00021">
    <property type="entry name" value="rpiA"/>
    <property type="match status" value="1"/>
</dbReference>
<dbReference type="PANTHER" id="PTHR11934">
    <property type="entry name" value="RIBOSE-5-PHOSPHATE ISOMERASE"/>
    <property type="match status" value="1"/>
</dbReference>
<dbReference type="PANTHER" id="PTHR11934:SF0">
    <property type="entry name" value="RIBOSE-5-PHOSPHATE ISOMERASE"/>
    <property type="match status" value="1"/>
</dbReference>
<dbReference type="Pfam" id="PF06026">
    <property type="entry name" value="Rib_5-P_isom_A"/>
    <property type="match status" value="1"/>
</dbReference>
<dbReference type="SUPFAM" id="SSF75445">
    <property type="entry name" value="D-ribose-5-phosphate isomerase (RpiA), lid domain"/>
    <property type="match status" value="1"/>
</dbReference>
<dbReference type="SUPFAM" id="SSF100950">
    <property type="entry name" value="NagB/RpiA/CoA transferase-like"/>
    <property type="match status" value="1"/>
</dbReference>
<comment type="function">
    <text evidence="1">Catalyzes the reversible conversion of ribose-5-phosphate to ribulose 5-phosphate.</text>
</comment>
<comment type="catalytic activity">
    <reaction evidence="1">
        <text>aldehydo-D-ribose 5-phosphate = D-ribulose 5-phosphate</text>
        <dbReference type="Rhea" id="RHEA:14657"/>
        <dbReference type="ChEBI" id="CHEBI:58121"/>
        <dbReference type="ChEBI" id="CHEBI:58273"/>
        <dbReference type="EC" id="5.3.1.6"/>
    </reaction>
</comment>
<comment type="pathway">
    <text evidence="1">Carbohydrate degradation; pentose phosphate pathway; D-ribose 5-phosphate from D-ribulose 5-phosphate (non-oxidative stage): step 1/1.</text>
</comment>
<comment type="subunit">
    <text evidence="1">Homodimer.</text>
</comment>
<comment type="similarity">
    <text evidence="1">Belongs to the ribose 5-phosphate isomerase family.</text>
</comment>
<name>RPIA_AZOSB</name>
<accession>A1K9D7</accession>
<evidence type="ECO:0000255" key="1">
    <source>
        <dbReference type="HAMAP-Rule" id="MF_00170"/>
    </source>
</evidence>
<sequence>MTQDELKKAAALAALDYVEDGMIVGVGTGSTVNHFIDGLAGIKHRIRGAVSSSEASSKRLAAHGIALLDLNDVDELPVYIDGADEIDHGFAMIKGGGGALTREKIVAAVARRFVCICDESKRVDVLGRFPLPIEVIPMARSQVMRAAAALGATPRLREGFVTDNGNLIIDLHGLSITDPCATEQALNAVVGVVTNGLFAARGADTLLLASAQGVRRFERSAT</sequence>
<reference key="1">
    <citation type="journal article" date="2006" name="Nat. Biotechnol.">
        <title>Complete genome of the mutualistic, N2-fixing grass endophyte Azoarcus sp. strain BH72.</title>
        <authorList>
            <person name="Krause A."/>
            <person name="Ramakumar A."/>
            <person name="Bartels D."/>
            <person name="Battistoni F."/>
            <person name="Bekel T."/>
            <person name="Boch J."/>
            <person name="Boehm M."/>
            <person name="Friedrich F."/>
            <person name="Hurek T."/>
            <person name="Krause L."/>
            <person name="Linke B."/>
            <person name="McHardy A.C."/>
            <person name="Sarkar A."/>
            <person name="Schneiker S."/>
            <person name="Syed A.A."/>
            <person name="Thauer R."/>
            <person name="Vorhoelter F.-J."/>
            <person name="Weidner S."/>
            <person name="Puehler A."/>
            <person name="Reinhold-Hurek B."/>
            <person name="Kaiser O."/>
            <person name="Goesmann A."/>
        </authorList>
    </citation>
    <scope>NUCLEOTIDE SEQUENCE [LARGE SCALE GENOMIC DNA]</scope>
    <source>
        <strain>BH72</strain>
    </source>
</reference>
<organism>
    <name type="scientific">Azoarcus sp. (strain BH72)</name>
    <dbReference type="NCBI Taxonomy" id="418699"/>
    <lineage>
        <taxon>Bacteria</taxon>
        <taxon>Pseudomonadati</taxon>
        <taxon>Pseudomonadota</taxon>
        <taxon>Betaproteobacteria</taxon>
        <taxon>Rhodocyclales</taxon>
        <taxon>Zoogloeaceae</taxon>
        <taxon>Azoarcus</taxon>
    </lineage>
</organism>
<proteinExistence type="inferred from homology"/>
<feature type="chain" id="PRO_1000016901" description="Ribose-5-phosphate isomerase A">
    <location>
        <begin position="1"/>
        <end position="222"/>
    </location>
</feature>
<feature type="active site" description="Proton acceptor" evidence="1">
    <location>
        <position position="103"/>
    </location>
</feature>
<feature type="binding site" evidence="1">
    <location>
        <begin position="28"/>
        <end position="31"/>
    </location>
    <ligand>
        <name>substrate</name>
    </ligand>
</feature>
<feature type="binding site" evidence="1">
    <location>
        <begin position="81"/>
        <end position="84"/>
    </location>
    <ligand>
        <name>substrate</name>
    </ligand>
</feature>
<feature type="binding site" evidence="1">
    <location>
        <begin position="94"/>
        <end position="97"/>
    </location>
    <ligand>
        <name>substrate</name>
    </ligand>
</feature>
<feature type="binding site" evidence="1">
    <location>
        <position position="121"/>
    </location>
    <ligand>
        <name>substrate</name>
    </ligand>
</feature>
<gene>
    <name evidence="1" type="primary">rpiA</name>
    <name type="ordered locus">azo2826</name>
</gene>
<keyword id="KW-0413">Isomerase</keyword>
<keyword id="KW-1185">Reference proteome</keyword>
<protein>
    <recommendedName>
        <fullName evidence="1">Ribose-5-phosphate isomerase A</fullName>
        <ecNumber evidence="1">5.3.1.6</ecNumber>
    </recommendedName>
    <alternativeName>
        <fullName evidence="1">Phosphoriboisomerase A</fullName>
        <shortName evidence="1">PRI</shortName>
    </alternativeName>
</protein>